<sequence>MDRKKDPSNNLTERRVSKVQRPNKKKVRNQVESLSRNLERNKEGQLLQTVSKGHLEADSGHSLGREKENGELGIRSIFYDKDWNPRGTAPSHYRNIPYNPATFKRRTEVQARLGNLENIKIPK</sequence>
<evidence type="ECO:0000250" key="1"/>
<evidence type="ECO:0000256" key="2">
    <source>
        <dbReference type="SAM" id="MobiDB-lite"/>
    </source>
</evidence>
<evidence type="ECO:0000305" key="3"/>
<protein>
    <recommendedName>
        <fullName>Altered inheritance of mitochondria protein 4</fullName>
    </recommendedName>
    <alternativeName>
        <fullName>Synthetic with old yellow enzyme protein 1</fullName>
    </alternativeName>
</protein>
<feature type="chain" id="PRO_0000399858" description="Altered inheritance of mitochondria protein 4">
    <location>
        <begin position="1"/>
        <end position="123"/>
    </location>
</feature>
<feature type="region of interest" description="Disordered" evidence="2">
    <location>
        <begin position="1"/>
        <end position="42"/>
    </location>
</feature>
<feature type="compositionally biased region" description="Basic and acidic residues" evidence="2">
    <location>
        <begin position="1"/>
        <end position="16"/>
    </location>
</feature>
<feature type="compositionally biased region" description="Basic residues" evidence="2">
    <location>
        <begin position="17"/>
        <end position="28"/>
    </location>
</feature>
<proteinExistence type="inferred from homology"/>
<name>AIM4_YEAS2</name>
<dbReference type="EMBL" id="ACFL01000023">
    <property type="protein sequence ID" value="EEU08704.1"/>
    <property type="molecule type" value="Genomic_DNA"/>
</dbReference>
<dbReference type="SMR" id="C7GKF3"/>
<dbReference type="Proteomes" id="UP000008073">
    <property type="component" value="Unassembled WGS sequence"/>
</dbReference>
<dbReference type="GO" id="GO:0005737">
    <property type="term" value="C:cytoplasm"/>
    <property type="evidence" value="ECO:0007669"/>
    <property type="project" value="UniProtKB-SubCell"/>
</dbReference>
<dbReference type="Pfam" id="PF12622">
    <property type="entry name" value="NpwBP"/>
    <property type="match status" value="1"/>
</dbReference>
<keyword id="KW-0963">Cytoplasm</keyword>
<organism>
    <name type="scientific">Saccharomyces cerevisiae (strain JAY291)</name>
    <name type="common">Baker's yeast</name>
    <dbReference type="NCBI Taxonomy" id="574961"/>
    <lineage>
        <taxon>Eukaryota</taxon>
        <taxon>Fungi</taxon>
        <taxon>Dikarya</taxon>
        <taxon>Ascomycota</taxon>
        <taxon>Saccharomycotina</taxon>
        <taxon>Saccharomycetes</taxon>
        <taxon>Saccharomycetales</taxon>
        <taxon>Saccharomycetaceae</taxon>
        <taxon>Saccharomyces</taxon>
    </lineage>
</organism>
<comment type="subunit">
    <text evidence="1">May interact with the nuclear pore complex.</text>
</comment>
<comment type="subcellular location">
    <subcellularLocation>
        <location evidence="1">Cytoplasm</location>
    </subcellularLocation>
</comment>
<comment type="similarity">
    <text evidence="3">Belongs to the AIM4 family.</text>
</comment>
<reference key="1">
    <citation type="journal article" date="2009" name="Genome Res.">
        <title>Genome structure of a Saccharomyces cerevisiae strain widely used in bioethanol production.</title>
        <authorList>
            <person name="Argueso J.L."/>
            <person name="Carazzolle M.F."/>
            <person name="Mieczkowski P.A."/>
            <person name="Duarte F.M."/>
            <person name="Netto O.V.C."/>
            <person name="Missawa S.K."/>
            <person name="Galzerani F."/>
            <person name="Costa G.G.L."/>
            <person name="Vidal R.O."/>
            <person name="Noronha M.F."/>
            <person name="Dominska M."/>
            <person name="Andrietta M.G.S."/>
            <person name="Andrietta S.R."/>
            <person name="Cunha A.F."/>
            <person name="Gomes L.H."/>
            <person name="Tavares F.C.A."/>
            <person name="Alcarde A.R."/>
            <person name="Dietrich F.S."/>
            <person name="McCusker J.H."/>
            <person name="Petes T.D."/>
            <person name="Pereira G.A.G."/>
        </authorList>
    </citation>
    <scope>NUCLEOTIDE SEQUENCE [LARGE SCALE GENOMIC DNA]</scope>
    <source>
        <strain>JAY291</strain>
    </source>
</reference>
<accession>C7GKF3</accession>
<gene>
    <name type="primary">AIM4</name>
    <name type="synonym">SOY1</name>
    <name type="ORF">C1Q_00687</name>
</gene>